<comment type="function">
    <text evidence="1">Produces ATP from ADP in the presence of a proton gradient across the membrane. The gamma chain is believed to be important in regulating ATPase activity and the flow of protons through the CF(0) complex.</text>
</comment>
<comment type="subunit">
    <text evidence="1">F-type ATPases have 2 components, CF(1) - the catalytic core - and CF(0) - the membrane proton channel. CF(1) has five subunits: alpha(3), beta(3), gamma(1), delta(1), epsilon(1). CF(0) has three main subunits: a, b and c.</text>
</comment>
<comment type="subcellular location">
    <subcellularLocation>
        <location evidence="1">Cell inner membrane</location>
        <topology evidence="1">Peripheral membrane protein</topology>
    </subcellularLocation>
</comment>
<comment type="similarity">
    <text evidence="1">Belongs to the ATPase gamma chain family.</text>
</comment>
<organism>
    <name type="scientific">Burkholderia pseudomallei (strain 668)</name>
    <dbReference type="NCBI Taxonomy" id="320373"/>
    <lineage>
        <taxon>Bacteria</taxon>
        <taxon>Pseudomonadati</taxon>
        <taxon>Pseudomonadota</taxon>
        <taxon>Betaproteobacteria</taxon>
        <taxon>Burkholderiales</taxon>
        <taxon>Burkholderiaceae</taxon>
        <taxon>Burkholderia</taxon>
        <taxon>pseudomallei group</taxon>
    </lineage>
</organism>
<feature type="chain" id="PRO_1000053174" description="ATP synthase gamma chain">
    <location>
        <begin position="1"/>
        <end position="291"/>
    </location>
</feature>
<keyword id="KW-0066">ATP synthesis</keyword>
<keyword id="KW-0997">Cell inner membrane</keyword>
<keyword id="KW-1003">Cell membrane</keyword>
<keyword id="KW-0139">CF(1)</keyword>
<keyword id="KW-0375">Hydrogen ion transport</keyword>
<keyword id="KW-0406">Ion transport</keyword>
<keyword id="KW-0472">Membrane</keyword>
<keyword id="KW-0813">Transport</keyword>
<sequence length="291" mass="31858">MAGMKEIRGKIKSVQNTRKITKAMEMVAASKMRRAQERMRAARPYAEKVRAIAAHMSRANPEYRHPFMVANDGVKTAGMILVTTDKGLCGGLNTNVLRASLQKFKELEEQGQKVEATAIGGKGLGFLNRFGAKVISQVVHLGDTPHLDKLIGAVKTQLDLYSEGKLSAVYLAYTRFVNTMKQETVIEQLLPLSSEHFDANDGTPATSWDYIYEPDAQAVVDELLVRYVEALVYQAVAENMASEQSARMVAMKAASDNAKTVISELQLSYNKSRQAAITKELSEIVGGAAAV</sequence>
<dbReference type="EMBL" id="CP000570">
    <property type="protein sequence ID" value="ABN83791.1"/>
    <property type="molecule type" value="Genomic_DNA"/>
</dbReference>
<dbReference type="RefSeq" id="WP_004195831.1">
    <property type="nucleotide sequence ID" value="NC_009074.1"/>
</dbReference>
<dbReference type="SMR" id="A3NF41"/>
<dbReference type="GeneID" id="92980625"/>
<dbReference type="KEGG" id="bpd:BURPS668_3969"/>
<dbReference type="HOGENOM" id="CLU_050669_0_1_4"/>
<dbReference type="GO" id="GO:0005886">
    <property type="term" value="C:plasma membrane"/>
    <property type="evidence" value="ECO:0007669"/>
    <property type="project" value="UniProtKB-SubCell"/>
</dbReference>
<dbReference type="GO" id="GO:0045259">
    <property type="term" value="C:proton-transporting ATP synthase complex"/>
    <property type="evidence" value="ECO:0007669"/>
    <property type="project" value="UniProtKB-KW"/>
</dbReference>
<dbReference type="GO" id="GO:0005524">
    <property type="term" value="F:ATP binding"/>
    <property type="evidence" value="ECO:0007669"/>
    <property type="project" value="UniProtKB-UniRule"/>
</dbReference>
<dbReference type="GO" id="GO:0046933">
    <property type="term" value="F:proton-transporting ATP synthase activity, rotational mechanism"/>
    <property type="evidence" value="ECO:0007669"/>
    <property type="project" value="UniProtKB-UniRule"/>
</dbReference>
<dbReference type="GO" id="GO:0042777">
    <property type="term" value="P:proton motive force-driven plasma membrane ATP synthesis"/>
    <property type="evidence" value="ECO:0007669"/>
    <property type="project" value="UniProtKB-UniRule"/>
</dbReference>
<dbReference type="CDD" id="cd12151">
    <property type="entry name" value="F1-ATPase_gamma"/>
    <property type="match status" value="1"/>
</dbReference>
<dbReference type="FunFam" id="1.10.287.80:FF:000005">
    <property type="entry name" value="ATP synthase gamma chain"/>
    <property type="match status" value="1"/>
</dbReference>
<dbReference type="Gene3D" id="3.40.1380.10">
    <property type="match status" value="1"/>
</dbReference>
<dbReference type="Gene3D" id="1.10.287.80">
    <property type="entry name" value="ATP synthase, gamma subunit, helix hairpin domain"/>
    <property type="match status" value="1"/>
</dbReference>
<dbReference type="HAMAP" id="MF_00815">
    <property type="entry name" value="ATP_synth_gamma_bact"/>
    <property type="match status" value="1"/>
</dbReference>
<dbReference type="InterPro" id="IPR035968">
    <property type="entry name" value="ATP_synth_F1_ATPase_gsu"/>
</dbReference>
<dbReference type="InterPro" id="IPR000131">
    <property type="entry name" value="ATP_synth_F1_gsu"/>
</dbReference>
<dbReference type="InterPro" id="IPR023632">
    <property type="entry name" value="ATP_synth_F1_gsu_CS"/>
</dbReference>
<dbReference type="NCBIfam" id="TIGR01146">
    <property type="entry name" value="ATPsyn_F1gamma"/>
    <property type="match status" value="1"/>
</dbReference>
<dbReference type="NCBIfam" id="NF004144">
    <property type="entry name" value="PRK05621.1-1"/>
    <property type="match status" value="1"/>
</dbReference>
<dbReference type="PANTHER" id="PTHR11693">
    <property type="entry name" value="ATP SYNTHASE GAMMA CHAIN"/>
    <property type="match status" value="1"/>
</dbReference>
<dbReference type="PANTHER" id="PTHR11693:SF22">
    <property type="entry name" value="ATP SYNTHASE SUBUNIT GAMMA, MITOCHONDRIAL"/>
    <property type="match status" value="1"/>
</dbReference>
<dbReference type="Pfam" id="PF00231">
    <property type="entry name" value="ATP-synt"/>
    <property type="match status" value="1"/>
</dbReference>
<dbReference type="PRINTS" id="PR00126">
    <property type="entry name" value="ATPASEGAMMA"/>
</dbReference>
<dbReference type="SUPFAM" id="SSF52943">
    <property type="entry name" value="ATP synthase (F1-ATPase), gamma subunit"/>
    <property type="match status" value="1"/>
</dbReference>
<dbReference type="PROSITE" id="PS00153">
    <property type="entry name" value="ATPASE_GAMMA"/>
    <property type="match status" value="1"/>
</dbReference>
<proteinExistence type="inferred from homology"/>
<gene>
    <name evidence="1" type="primary">atpG</name>
    <name type="ordered locus">BURPS668_3969</name>
</gene>
<name>ATPG_BURP6</name>
<accession>A3NF41</accession>
<reference key="1">
    <citation type="journal article" date="2010" name="Genome Biol. Evol.">
        <title>Continuing evolution of Burkholderia mallei through genome reduction and large-scale rearrangements.</title>
        <authorList>
            <person name="Losada L."/>
            <person name="Ronning C.M."/>
            <person name="DeShazer D."/>
            <person name="Woods D."/>
            <person name="Fedorova N."/>
            <person name="Kim H.S."/>
            <person name="Shabalina S.A."/>
            <person name="Pearson T.R."/>
            <person name="Brinkac L."/>
            <person name="Tan P."/>
            <person name="Nandi T."/>
            <person name="Crabtree J."/>
            <person name="Badger J."/>
            <person name="Beckstrom-Sternberg S."/>
            <person name="Saqib M."/>
            <person name="Schutzer S.E."/>
            <person name="Keim P."/>
            <person name="Nierman W.C."/>
        </authorList>
    </citation>
    <scope>NUCLEOTIDE SEQUENCE [LARGE SCALE GENOMIC DNA]</scope>
    <source>
        <strain>668</strain>
    </source>
</reference>
<evidence type="ECO:0000255" key="1">
    <source>
        <dbReference type="HAMAP-Rule" id="MF_00815"/>
    </source>
</evidence>
<protein>
    <recommendedName>
        <fullName evidence="1">ATP synthase gamma chain</fullName>
    </recommendedName>
    <alternativeName>
        <fullName evidence="1">ATP synthase F1 sector gamma subunit</fullName>
    </alternativeName>
    <alternativeName>
        <fullName evidence="1">F-ATPase gamma subunit</fullName>
    </alternativeName>
</protein>